<protein>
    <recommendedName>
        <fullName evidence="1">UDP-N-acetylmuramate--L-alanine ligase</fullName>
        <ecNumber evidence="1">6.3.2.8</ecNumber>
    </recommendedName>
    <alternativeName>
        <fullName evidence="1">UDP-N-acetylmuramoyl-L-alanine synthetase</fullName>
    </alternativeName>
</protein>
<comment type="function">
    <text evidence="1">Cell wall formation.</text>
</comment>
<comment type="catalytic activity">
    <reaction evidence="1">
        <text>UDP-N-acetyl-alpha-D-muramate + L-alanine + ATP = UDP-N-acetyl-alpha-D-muramoyl-L-alanine + ADP + phosphate + H(+)</text>
        <dbReference type="Rhea" id="RHEA:23372"/>
        <dbReference type="ChEBI" id="CHEBI:15378"/>
        <dbReference type="ChEBI" id="CHEBI:30616"/>
        <dbReference type="ChEBI" id="CHEBI:43474"/>
        <dbReference type="ChEBI" id="CHEBI:57972"/>
        <dbReference type="ChEBI" id="CHEBI:70757"/>
        <dbReference type="ChEBI" id="CHEBI:83898"/>
        <dbReference type="ChEBI" id="CHEBI:456216"/>
        <dbReference type="EC" id="6.3.2.8"/>
    </reaction>
</comment>
<comment type="pathway">
    <text evidence="1">Cell wall biogenesis; peptidoglycan biosynthesis.</text>
</comment>
<comment type="subcellular location">
    <subcellularLocation>
        <location evidence="1">Cytoplasm</location>
    </subcellularLocation>
</comment>
<comment type="similarity">
    <text evidence="1">Belongs to the MurCDEF family.</text>
</comment>
<keyword id="KW-0067">ATP-binding</keyword>
<keyword id="KW-0131">Cell cycle</keyword>
<keyword id="KW-0132">Cell division</keyword>
<keyword id="KW-0133">Cell shape</keyword>
<keyword id="KW-0961">Cell wall biogenesis/degradation</keyword>
<keyword id="KW-0963">Cytoplasm</keyword>
<keyword id="KW-0436">Ligase</keyword>
<keyword id="KW-0547">Nucleotide-binding</keyword>
<keyword id="KW-0573">Peptidoglycan synthesis</keyword>
<reference key="1">
    <citation type="journal article" date="2007" name="PLoS ONE">
        <title>Analysis of the neurotoxin complex genes in Clostridium botulinum A1-A4 and B1 strains: BoNT/A3, /Ba4 and /B1 clusters are located within plasmids.</title>
        <authorList>
            <person name="Smith T.J."/>
            <person name="Hill K.K."/>
            <person name="Foley B.T."/>
            <person name="Detter J.C."/>
            <person name="Munk A.C."/>
            <person name="Bruce D.C."/>
            <person name="Doggett N.A."/>
            <person name="Smith L.A."/>
            <person name="Marks J.D."/>
            <person name="Xie G."/>
            <person name="Brettin T.S."/>
        </authorList>
    </citation>
    <scope>NUCLEOTIDE SEQUENCE [LARGE SCALE GENOMIC DNA]</scope>
    <source>
        <strain>Okra / Type B1</strain>
    </source>
</reference>
<gene>
    <name evidence="1" type="primary">murC</name>
    <name type="ordered locus">CLD_0935</name>
</gene>
<dbReference type="EC" id="6.3.2.8" evidence="1"/>
<dbReference type="EMBL" id="CP000939">
    <property type="protein sequence ID" value="ACA44838.1"/>
    <property type="molecule type" value="Genomic_DNA"/>
</dbReference>
<dbReference type="RefSeq" id="WP_003403818.1">
    <property type="nucleotide sequence ID" value="NC_010516.1"/>
</dbReference>
<dbReference type="SMR" id="B1IH05"/>
<dbReference type="KEGG" id="cbb:CLD_0935"/>
<dbReference type="HOGENOM" id="CLU_028104_1_0_9"/>
<dbReference type="UniPathway" id="UPA00219"/>
<dbReference type="Proteomes" id="UP000008541">
    <property type="component" value="Chromosome"/>
</dbReference>
<dbReference type="GO" id="GO:0005737">
    <property type="term" value="C:cytoplasm"/>
    <property type="evidence" value="ECO:0007669"/>
    <property type="project" value="UniProtKB-SubCell"/>
</dbReference>
<dbReference type="GO" id="GO:0005524">
    <property type="term" value="F:ATP binding"/>
    <property type="evidence" value="ECO:0007669"/>
    <property type="project" value="UniProtKB-UniRule"/>
</dbReference>
<dbReference type="GO" id="GO:0008763">
    <property type="term" value="F:UDP-N-acetylmuramate-L-alanine ligase activity"/>
    <property type="evidence" value="ECO:0007669"/>
    <property type="project" value="UniProtKB-UniRule"/>
</dbReference>
<dbReference type="GO" id="GO:0051301">
    <property type="term" value="P:cell division"/>
    <property type="evidence" value="ECO:0007669"/>
    <property type="project" value="UniProtKB-KW"/>
</dbReference>
<dbReference type="GO" id="GO:0071555">
    <property type="term" value="P:cell wall organization"/>
    <property type="evidence" value="ECO:0007669"/>
    <property type="project" value="UniProtKB-KW"/>
</dbReference>
<dbReference type="GO" id="GO:0009252">
    <property type="term" value="P:peptidoglycan biosynthetic process"/>
    <property type="evidence" value="ECO:0007669"/>
    <property type="project" value="UniProtKB-UniRule"/>
</dbReference>
<dbReference type="GO" id="GO:0008360">
    <property type="term" value="P:regulation of cell shape"/>
    <property type="evidence" value="ECO:0007669"/>
    <property type="project" value="UniProtKB-KW"/>
</dbReference>
<dbReference type="Gene3D" id="3.90.190.20">
    <property type="entry name" value="Mur ligase, C-terminal domain"/>
    <property type="match status" value="1"/>
</dbReference>
<dbReference type="Gene3D" id="3.40.1190.10">
    <property type="entry name" value="Mur-like, catalytic domain"/>
    <property type="match status" value="1"/>
</dbReference>
<dbReference type="Gene3D" id="3.40.50.720">
    <property type="entry name" value="NAD(P)-binding Rossmann-like Domain"/>
    <property type="match status" value="1"/>
</dbReference>
<dbReference type="HAMAP" id="MF_00046">
    <property type="entry name" value="MurC"/>
    <property type="match status" value="1"/>
</dbReference>
<dbReference type="InterPro" id="IPR036565">
    <property type="entry name" value="Mur-like_cat_sf"/>
</dbReference>
<dbReference type="InterPro" id="IPR004101">
    <property type="entry name" value="Mur_ligase_C"/>
</dbReference>
<dbReference type="InterPro" id="IPR036615">
    <property type="entry name" value="Mur_ligase_C_dom_sf"/>
</dbReference>
<dbReference type="InterPro" id="IPR013221">
    <property type="entry name" value="Mur_ligase_cen"/>
</dbReference>
<dbReference type="InterPro" id="IPR000713">
    <property type="entry name" value="Mur_ligase_N"/>
</dbReference>
<dbReference type="InterPro" id="IPR050061">
    <property type="entry name" value="MurCDEF_pg_biosynth"/>
</dbReference>
<dbReference type="InterPro" id="IPR005758">
    <property type="entry name" value="UDP-N-AcMur_Ala_ligase_MurC"/>
</dbReference>
<dbReference type="NCBIfam" id="TIGR01082">
    <property type="entry name" value="murC"/>
    <property type="match status" value="1"/>
</dbReference>
<dbReference type="PANTHER" id="PTHR43445:SF3">
    <property type="entry name" value="UDP-N-ACETYLMURAMATE--L-ALANINE LIGASE"/>
    <property type="match status" value="1"/>
</dbReference>
<dbReference type="PANTHER" id="PTHR43445">
    <property type="entry name" value="UDP-N-ACETYLMURAMATE--L-ALANINE LIGASE-RELATED"/>
    <property type="match status" value="1"/>
</dbReference>
<dbReference type="Pfam" id="PF01225">
    <property type="entry name" value="Mur_ligase"/>
    <property type="match status" value="1"/>
</dbReference>
<dbReference type="Pfam" id="PF02875">
    <property type="entry name" value="Mur_ligase_C"/>
    <property type="match status" value="1"/>
</dbReference>
<dbReference type="Pfam" id="PF08245">
    <property type="entry name" value="Mur_ligase_M"/>
    <property type="match status" value="1"/>
</dbReference>
<dbReference type="SUPFAM" id="SSF51984">
    <property type="entry name" value="MurCD N-terminal domain"/>
    <property type="match status" value="1"/>
</dbReference>
<dbReference type="SUPFAM" id="SSF53623">
    <property type="entry name" value="MurD-like peptide ligases, catalytic domain"/>
    <property type="match status" value="1"/>
</dbReference>
<dbReference type="SUPFAM" id="SSF53244">
    <property type="entry name" value="MurD-like peptide ligases, peptide-binding domain"/>
    <property type="match status" value="1"/>
</dbReference>
<organism>
    <name type="scientific">Clostridium botulinum (strain Okra / Type B1)</name>
    <dbReference type="NCBI Taxonomy" id="498213"/>
    <lineage>
        <taxon>Bacteria</taxon>
        <taxon>Bacillati</taxon>
        <taxon>Bacillota</taxon>
        <taxon>Clostridia</taxon>
        <taxon>Eubacteriales</taxon>
        <taxon>Clostridiaceae</taxon>
        <taxon>Clostridium</taxon>
    </lineage>
</organism>
<name>MURC_CLOBK</name>
<feature type="chain" id="PRO_1000091091" description="UDP-N-acetylmuramate--L-alanine ligase">
    <location>
        <begin position="1"/>
        <end position="458"/>
    </location>
</feature>
<feature type="binding site" evidence="1">
    <location>
        <begin position="118"/>
        <end position="124"/>
    </location>
    <ligand>
        <name>ATP</name>
        <dbReference type="ChEBI" id="CHEBI:30616"/>
    </ligand>
</feature>
<evidence type="ECO:0000255" key="1">
    <source>
        <dbReference type="HAMAP-Rule" id="MF_00046"/>
    </source>
</evidence>
<accession>B1IH05</accession>
<sequence>MSFDFIKDKNKHIHFIGIGGISMSGLAEILLYNNFSISGSDMNSSPITEKLKDKGAKIYIGHKKENVKNADLIVYTAAIASDNPEIIEAKEKNIKLMDRADFLGNLMKGYKYNIAISGTHGKTTTTSMLSHVALKANVDPTILVGGNLDIINGNVRVGESDFFITEACEYKSSFLKFFPYIGVILNIDADHLDYYKDLDDIKNAFSKFIKLIPKDGYLVAYGEDKNIQSIIKEANCNVITYGINSGDIQAHNIEYDEKACGNFDVVKDNQKLFSVKLNVPGKHNILNSLASICIGLASDMKDKDIIEGIESFFGTHRRFELKGCKNNITVIDDYAHHPTEISATLDAAKKYPHNKMFCVFQPHTYSRTLTLFDDFTKCFDNADEIILADIYAAREKDTGIINSNMLGDKLRERGLKCTNFHKFDDIKNYLIENAKDGDLILTVGAGDIYKVGEMYINL</sequence>
<proteinExistence type="inferred from homology"/>